<protein>
    <recommendedName>
        <fullName evidence="1">Large ribosomal subunit protein uL4</fullName>
    </recommendedName>
    <alternativeName>
        <fullName evidence="3">50S ribosomal protein L4</fullName>
    </alternativeName>
</protein>
<keyword id="KW-0687">Ribonucleoprotein</keyword>
<keyword id="KW-0689">Ribosomal protein</keyword>
<keyword id="KW-0694">RNA-binding</keyword>
<keyword id="KW-0699">rRNA-binding</keyword>
<proteinExistence type="inferred from homology"/>
<evidence type="ECO:0000255" key="1">
    <source>
        <dbReference type="HAMAP-Rule" id="MF_01328"/>
    </source>
</evidence>
<evidence type="ECO:0000256" key="2">
    <source>
        <dbReference type="SAM" id="MobiDB-lite"/>
    </source>
</evidence>
<evidence type="ECO:0000305" key="3"/>
<accession>Q6FZC3</accession>
<organism>
    <name type="scientific">Bartonella quintana (strain Toulouse)</name>
    <name type="common">Rochalimaea quintana</name>
    <dbReference type="NCBI Taxonomy" id="283165"/>
    <lineage>
        <taxon>Bacteria</taxon>
        <taxon>Pseudomonadati</taxon>
        <taxon>Pseudomonadota</taxon>
        <taxon>Alphaproteobacteria</taxon>
        <taxon>Hyphomicrobiales</taxon>
        <taxon>Bartonellaceae</taxon>
        <taxon>Bartonella</taxon>
    </lineage>
</organism>
<comment type="function">
    <text evidence="1">One of the primary rRNA binding proteins, this protein initially binds near the 5'-end of the 23S rRNA. It is important during the early stages of 50S assembly. It makes multiple contacts with different domains of the 23S rRNA in the assembled 50S subunit and ribosome.</text>
</comment>
<comment type="function">
    <text evidence="1">Forms part of the polypeptide exit tunnel.</text>
</comment>
<comment type="subunit">
    <text evidence="1">Part of the 50S ribosomal subunit.</text>
</comment>
<comment type="similarity">
    <text evidence="1">Belongs to the universal ribosomal protein uL4 family.</text>
</comment>
<dbReference type="EMBL" id="BX897700">
    <property type="protein sequence ID" value="CAF26305.1"/>
    <property type="molecule type" value="Genomic_DNA"/>
</dbReference>
<dbReference type="RefSeq" id="WP_011179551.1">
    <property type="nucleotide sequence ID" value="NC_005955.1"/>
</dbReference>
<dbReference type="SMR" id="Q6FZC3"/>
<dbReference type="KEGG" id="bqu:BQ08220"/>
<dbReference type="eggNOG" id="COG0088">
    <property type="taxonomic scope" value="Bacteria"/>
</dbReference>
<dbReference type="HOGENOM" id="CLU_041575_5_1_5"/>
<dbReference type="OrthoDB" id="9803201at2"/>
<dbReference type="Proteomes" id="UP000000597">
    <property type="component" value="Chromosome"/>
</dbReference>
<dbReference type="GO" id="GO:1990904">
    <property type="term" value="C:ribonucleoprotein complex"/>
    <property type="evidence" value="ECO:0007669"/>
    <property type="project" value="UniProtKB-KW"/>
</dbReference>
<dbReference type="GO" id="GO:0005840">
    <property type="term" value="C:ribosome"/>
    <property type="evidence" value="ECO:0007669"/>
    <property type="project" value="UniProtKB-KW"/>
</dbReference>
<dbReference type="GO" id="GO:0019843">
    <property type="term" value="F:rRNA binding"/>
    <property type="evidence" value="ECO:0007669"/>
    <property type="project" value="UniProtKB-UniRule"/>
</dbReference>
<dbReference type="GO" id="GO:0003735">
    <property type="term" value="F:structural constituent of ribosome"/>
    <property type="evidence" value="ECO:0007669"/>
    <property type="project" value="InterPro"/>
</dbReference>
<dbReference type="GO" id="GO:0006412">
    <property type="term" value="P:translation"/>
    <property type="evidence" value="ECO:0007669"/>
    <property type="project" value="UniProtKB-UniRule"/>
</dbReference>
<dbReference type="Gene3D" id="3.40.1370.10">
    <property type="match status" value="1"/>
</dbReference>
<dbReference type="HAMAP" id="MF_01328_B">
    <property type="entry name" value="Ribosomal_uL4_B"/>
    <property type="match status" value="1"/>
</dbReference>
<dbReference type="InterPro" id="IPR002136">
    <property type="entry name" value="Ribosomal_uL4"/>
</dbReference>
<dbReference type="InterPro" id="IPR013005">
    <property type="entry name" value="Ribosomal_uL4-like"/>
</dbReference>
<dbReference type="InterPro" id="IPR023574">
    <property type="entry name" value="Ribosomal_uL4_dom_sf"/>
</dbReference>
<dbReference type="NCBIfam" id="TIGR03953">
    <property type="entry name" value="rplD_bact"/>
    <property type="match status" value="1"/>
</dbReference>
<dbReference type="PANTHER" id="PTHR10746">
    <property type="entry name" value="50S RIBOSOMAL PROTEIN L4"/>
    <property type="match status" value="1"/>
</dbReference>
<dbReference type="PANTHER" id="PTHR10746:SF6">
    <property type="entry name" value="LARGE RIBOSOMAL SUBUNIT PROTEIN UL4M"/>
    <property type="match status" value="1"/>
</dbReference>
<dbReference type="Pfam" id="PF00573">
    <property type="entry name" value="Ribosomal_L4"/>
    <property type="match status" value="1"/>
</dbReference>
<dbReference type="SUPFAM" id="SSF52166">
    <property type="entry name" value="Ribosomal protein L4"/>
    <property type="match status" value="1"/>
</dbReference>
<gene>
    <name evidence="1" type="primary">rplD</name>
    <name type="ordered locus">BQ08220</name>
</gene>
<reference key="1">
    <citation type="journal article" date="2004" name="Proc. Natl. Acad. Sci. U.S.A.">
        <title>The louse-borne human pathogen Bartonella quintana is a genomic derivative of the zoonotic agent Bartonella henselae.</title>
        <authorList>
            <person name="Alsmark U.C.M."/>
            <person name="Frank A.C."/>
            <person name="Karlberg E.O."/>
            <person name="Legault B.-A."/>
            <person name="Ardell D.H."/>
            <person name="Canbaeck B."/>
            <person name="Eriksson A.-S."/>
            <person name="Naeslund A.K."/>
            <person name="Handley S.A."/>
            <person name="Huvet M."/>
            <person name="La Scola B."/>
            <person name="Holmberg M."/>
            <person name="Andersson S.G.E."/>
        </authorList>
    </citation>
    <scope>NUCLEOTIDE SEQUENCE [LARGE SCALE GENOMIC DNA]</scope>
    <source>
        <strain>Toulouse</strain>
    </source>
</reference>
<sequence length="206" mass="22797">MDLVIRTLDGNEAGRLKVSESIFGLVPREDILQRVVRWQLARHQQGTHHSQGRSDVSRTGAKMFKQKGTGRARHSSARAPQFRGGGKAHGPVVRSHAHDLPKKIRVLGLRLALSAKLKANDLIIVDELNVKEAKTKMLVSCFSKLGFKNALLVGGKEIDINFSRAASNIPNIDILPIQGINVYDILRRSKLVLSKAAVEALEERFK</sequence>
<feature type="chain" id="PRO_0000242345" description="Large ribosomal subunit protein uL4">
    <location>
        <begin position="1"/>
        <end position="206"/>
    </location>
</feature>
<feature type="region of interest" description="Disordered" evidence="2">
    <location>
        <begin position="65"/>
        <end position="94"/>
    </location>
</feature>
<feature type="compositionally biased region" description="Basic residues" evidence="2">
    <location>
        <begin position="65"/>
        <end position="76"/>
    </location>
</feature>
<name>RL4_BARQU</name>